<name>LUXS_STRA5</name>
<organism>
    <name type="scientific">Streptococcus agalactiae serotype V (strain ATCC BAA-611 / 2603 V/R)</name>
    <dbReference type="NCBI Taxonomy" id="208435"/>
    <lineage>
        <taxon>Bacteria</taxon>
        <taxon>Bacillati</taxon>
        <taxon>Bacillota</taxon>
        <taxon>Bacilli</taxon>
        <taxon>Lactobacillales</taxon>
        <taxon>Streptococcaceae</taxon>
        <taxon>Streptococcus</taxon>
    </lineage>
</organism>
<accession>P65333</accession>
<accession>Q8E1P8</accession>
<accession>Q8E763</accession>
<comment type="function">
    <text evidence="1">Involved in the synthesis of autoinducer 2 (AI-2) which is secreted by bacteria and is used to communicate both the cell density and the metabolic potential of the environment. The regulation of gene expression in response to changes in cell density is called quorum sensing. Catalyzes the transformation of S-ribosylhomocysteine (RHC) to homocysteine (HC) and 4,5-dihydroxy-2,3-pentadione (DPD).</text>
</comment>
<comment type="catalytic activity">
    <reaction evidence="1">
        <text>S-(5-deoxy-D-ribos-5-yl)-L-homocysteine = (S)-4,5-dihydroxypentane-2,3-dione + L-homocysteine</text>
        <dbReference type="Rhea" id="RHEA:17753"/>
        <dbReference type="ChEBI" id="CHEBI:29484"/>
        <dbReference type="ChEBI" id="CHEBI:58195"/>
        <dbReference type="ChEBI" id="CHEBI:58199"/>
        <dbReference type="EC" id="4.4.1.21"/>
    </reaction>
</comment>
<comment type="cofactor">
    <cofactor evidence="1">
        <name>Fe cation</name>
        <dbReference type="ChEBI" id="CHEBI:24875"/>
    </cofactor>
    <text evidence="1">Binds 1 Fe cation per subunit.</text>
</comment>
<comment type="subunit">
    <text evidence="1">Homodimer.</text>
</comment>
<comment type="similarity">
    <text evidence="1">Belongs to the LuxS family.</text>
</comment>
<feature type="chain" id="PRO_0000172262" description="S-ribosylhomocysteine lyase">
    <location>
        <begin position="1"/>
        <end position="160"/>
    </location>
</feature>
<feature type="binding site" evidence="1">
    <location>
        <position position="57"/>
    </location>
    <ligand>
        <name>Fe cation</name>
        <dbReference type="ChEBI" id="CHEBI:24875"/>
    </ligand>
</feature>
<feature type="binding site" evidence="1">
    <location>
        <position position="61"/>
    </location>
    <ligand>
        <name>Fe cation</name>
        <dbReference type="ChEBI" id="CHEBI:24875"/>
    </ligand>
</feature>
<feature type="binding site" evidence="1">
    <location>
        <position position="127"/>
    </location>
    <ligand>
        <name>Fe cation</name>
        <dbReference type="ChEBI" id="CHEBI:24875"/>
    </ligand>
</feature>
<gene>
    <name evidence="1" type="primary">luxS</name>
    <name type="ordered locus">SAG0305</name>
</gene>
<dbReference type="EC" id="4.4.1.21" evidence="1"/>
<dbReference type="EMBL" id="AE009948">
    <property type="protein sequence ID" value="AAM99212.1"/>
    <property type="molecule type" value="Genomic_DNA"/>
</dbReference>
<dbReference type="RefSeq" id="NP_687340.1">
    <property type="nucleotide sequence ID" value="NC_004116.1"/>
</dbReference>
<dbReference type="RefSeq" id="WP_000159885.1">
    <property type="nucleotide sequence ID" value="NC_004116.1"/>
</dbReference>
<dbReference type="SMR" id="P65333"/>
<dbReference type="STRING" id="208435.SAG0305"/>
<dbReference type="KEGG" id="sag:SAG0305"/>
<dbReference type="PATRIC" id="fig|208435.3.peg.302"/>
<dbReference type="HOGENOM" id="CLU_107531_2_1_9"/>
<dbReference type="OrthoDB" id="9788129at2"/>
<dbReference type="Proteomes" id="UP000000821">
    <property type="component" value="Chromosome"/>
</dbReference>
<dbReference type="GO" id="GO:0005506">
    <property type="term" value="F:iron ion binding"/>
    <property type="evidence" value="ECO:0007669"/>
    <property type="project" value="InterPro"/>
</dbReference>
<dbReference type="GO" id="GO:0043768">
    <property type="term" value="F:S-ribosylhomocysteine lyase activity"/>
    <property type="evidence" value="ECO:0007669"/>
    <property type="project" value="UniProtKB-UniRule"/>
</dbReference>
<dbReference type="GO" id="GO:0009372">
    <property type="term" value="P:quorum sensing"/>
    <property type="evidence" value="ECO:0007669"/>
    <property type="project" value="UniProtKB-UniRule"/>
</dbReference>
<dbReference type="Gene3D" id="3.30.1360.80">
    <property type="entry name" value="S-ribosylhomocysteinase (LuxS)"/>
    <property type="match status" value="1"/>
</dbReference>
<dbReference type="HAMAP" id="MF_00091">
    <property type="entry name" value="LuxS"/>
    <property type="match status" value="1"/>
</dbReference>
<dbReference type="InterPro" id="IPR037005">
    <property type="entry name" value="LuxS_sf"/>
</dbReference>
<dbReference type="InterPro" id="IPR011249">
    <property type="entry name" value="Metalloenz_LuxS/M16"/>
</dbReference>
<dbReference type="InterPro" id="IPR003815">
    <property type="entry name" value="S-ribosylhomocysteinase"/>
</dbReference>
<dbReference type="NCBIfam" id="NF002607">
    <property type="entry name" value="PRK02260.2-5"/>
    <property type="match status" value="1"/>
</dbReference>
<dbReference type="NCBIfam" id="NF002608">
    <property type="entry name" value="PRK02260.3-1"/>
    <property type="match status" value="1"/>
</dbReference>
<dbReference type="PANTHER" id="PTHR35799">
    <property type="entry name" value="S-RIBOSYLHOMOCYSTEINE LYASE"/>
    <property type="match status" value="1"/>
</dbReference>
<dbReference type="PANTHER" id="PTHR35799:SF1">
    <property type="entry name" value="S-RIBOSYLHOMOCYSTEINE LYASE"/>
    <property type="match status" value="1"/>
</dbReference>
<dbReference type="Pfam" id="PF02664">
    <property type="entry name" value="LuxS"/>
    <property type="match status" value="1"/>
</dbReference>
<dbReference type="PIRSF" id="PIRSF006160">
    <property type="entry name" value="AI2"/>
    <property type="match status" value="1"/>
</dbReference>
<dbReference type="PRINTS" id="PR01487">
    <property type="entry name" value="LUXSPROTEIN"/>
</dbReference>
<dbReference type="SUPFAM" id="SSF63411">
    <property type="entry name" value="LuxS/MPP-like metallohydrolase"/>
    <property type="match status" value="1"/>
</dbReference>
<evidence type="ECO:0000255" key="1">
    <source>
        <dbReference type="HAMAP-Rule" id="MF_00091"/>
    </source>
</evidence>
<sequence>MTKEVVVESFELDHTIVKAPYVRLISEEVGPVGDIITNFDIRLIQPNENAIDTAGLHTIEHLLAKLIRQRINGLIDCSPFGCRTGFHMIMWGKQDATEIAKVIKSSLEAIAGGVTWEDVPGTTIESCGNYKDHSLHSAQEWAKLILSQGISDNAFERHIV</sequence>
<keyword id="KW-0071">Autoinducer synthesis</keyword>
<keyword id="KW-0408">Iron</keyword>
<keyword id="KW-0456">Lyase</keyword>
<keyword id="KW-0479">Metal-binding</keyword>
<keyword id="KW-0673">Quorum sensing</keyword>
<keyword id="KW-1185">Reference proteome</keyword>
<protein>
    <recommendedName>
        <fullName evidence="1">S-ribosylhomocysteine lyase</fullName>
        <ecNumber evidence="1">4.4.1.21</ecNumber>
    </recommendedName>
    <alternativeName>
        <fullName evidence="1">AI-2 synthesis protein</fullName>
    </alternativeName>
    <alternativeName>
        <fullName evidence="1">Autoinducer-2 production protein LuxS</fullName>
    </alternativeName>
</protein>
<reference key="1">
    <citation type="journal article" date="2002" name="Proc. Natl. Acad. Sci. U.S.A.">
        <title>Complete genome sequence and comparative genomic analysis of an emerging human pathogen, serotype V Streptococcus agalactiae.</title>
        <authorList>
            <person name="Tettelin H."/>
            <person name="Masignani V."/>
            <person name="Cieslewicz M.J."/>
            <person name="Eisen J.A."/>
            <person name="Peterson S.N."/>
            <person name="Wessels M.R."/>
            <person name="Paulsen I.T."/>
            <person name="Nelson K.E."/>
            <person name="Margarit I."/>
            <person name="Read T.D."/>
            <person name="Madoff L.C."/>
            <person name="Wolf A.M."/>
            <person name="Beanan M.J."/>
            <person name="Brinkac L.M."/>
            <person name="Daugherty S.C."/>
            <person name="DeBoy R.T."/>
            <person name="Durkin A.S."/>
            <person name="Kolonay J.F."/>
            <person name="Madupu R."/>
            <person name="Lewis M.R."/>
            <person name="Radune D."/>
            <person name="Fedorova N.B."/>
            <person name="Scanlan D."/>
            <person name="Khouri H.M."/>
            <person name="Mulligan S."/>
            <person name="Carty H.A."/>
            <person name="Cline R.T."/>
            <person name="Van Aken S.E."/>
            <person name="Gill J."/>
            <person name="Scarselli M."/>
            <person name="Mora M."/>
            <person name="Iacobini E.T."/>
            <person name="Brettoni C."/>
            <person name="Galli G."/>
            <person name="Mariani M."/>
            <person name="Vegni F."/>
            <person name="Maione D."/>
            <person name="Rinaudo D."/>
            <person name="Rappuoli R."/>
            <person name="Telford J.L."/>
            <person name="Kasper D.L."/>
            <person name="Grandi G."/>
            <person name="Fraser C.M."/>
        </authorList>
    </citation>
    <scope>NUCLEOTIDE SEQUENCE [LARGE SCALE GENOMIC DNA]</scope>
    <source>
        <strain>ATCC BAA-611 / 2603 V/R</strain>
    </source>
</reference>
<proteinExistence type="inferred from homology"/>